<sequence>MESNGGGGGSPKEAAVVVPSSGDATLGGHLARRLVQVGVSDVFAVPGDFNLTLLDHLIAEPGLRVVGCCNELNAGYAADGYARARGVGACAVTFTVGGLSVLNAIGGAYSENLPLICIVGGPNSNDYGTNRILHHTIGLPDFSQELRCFQPLTCYQAVVNNLDDAHDQIDRAISTAIRESKPVYISVSCNLPAVPHPTFSRDPVPYFLSPRLSNQASLHAALDATLAFLDKAVKPVLVAGPKLRVAKAGGAFVDLADASGHAVAAMPSAKGLVPETLPRFIGTYWGAVSTAFCAEIVESADAYLFAGPIFNDYSSVGYSCLLKKEKAVVVQPDRVTVGNGPAFGCVMMRDFLSELAKRVRKNTTAFDNYKRIFVPEGQLPECEAGEALRVNVLFKHIQRMIGGTEIGAVMAETGDSWFNCQKLRLPEGCGYEFQMQYGSIGWSVGALLGYAQAVQKRVVACIGDGSFQVTAQDVSTMLRCGQRSIIFLINNGGYTIEVEIHDGPYNVIKNWDYVGLVNAIHNGEGRCWATRVRCEEELEAAIATATGDKADSLCFIEVVAHKDDTSKELLEWGSRVSAANSRPPNPQ</sequence>
<gene>
    <name type="primary">PDC3</name>
    <name type="ordered locus">Os07g0693100</name>
    <name type="ordered locus">LOC_Os07g49250</name>
    <name type="ORF">OsJ_024667</name>
</gene>
<name>PDC3_ORYSJ</name>
<comment type="catalytic activity">
    <reaction>
        <text>a 2-oxocarboxylate + H(+) = an aldehyde + CO2</text>
        <dbReference type="Rhea" id="RHEA:11628"/>
        <dbReference type="ChEBI" id="CHEBI:15378"/>
        <dbReference type="ChEBI" id="CHEBI:16526"/>
        <dbReference type="ChEBI" id="CHEBI:17478"/>
        <dbReference type="ChEBI" id="CHEBI:35179"/>
        <dbReference type="EC" id="4.1.1.1"/>
    </reaction>
</comment>
<comment type="cofactor">
    <cofactor>
        <name>a metal cation</name>
        <dbReference type="ChEBI" id="CHEBI:25213"/>
    </cofactor>
    <text>Binds 1 metal ion per subunit.</text>
</comment>
<comment type="cofactor">
    <cofactor>
        <name>thiamine diphosphate</name>
        <dbReference type="ChEBI" id="CHEBI:58937"/>
    </cofactor>
    <text>Binds 1 thiamine pyrophosphate per subunit.</text>
</comment>
<comment type="subunit">
    <text evidence="2">Homotetramer.</text>
</comment>
<comment type="similarity">
    <text evidence="2">Belongs to the TPP enzyme family.</text>
</comment>
<dbReference type="EC" id="4.1.1.1"/>
<dbReference type="EMBL" id="AB111050">
    <property type="protein sequence ID" value="BAC77042.1"/>
    <property type="molecule type" value="mRNA"/>
</dbReference>
<dbReference type="EMBL" id="AP004333">
    <property type="protein sequence ID" value="BAC75566.1"/>
    <property type="molecule type" value="Genomic_DNA"/>
</dbReference>
<dbReference type="EMBL" id="AP008213">
    <property type="protein sequence ID" value="BAF22641.1"/>
    <property type="molecule type" value="Genomic_DNA"/>
</dbReference>
<dbReference type="EMBL" id="AP014963">
    <property type="protein sequence ID" value="BAT03355.1"/>
    <property type="molecule type" value="Genomic_DNA"/>
</dbReference>
<dbReference type="EMBL" id="CM000144">
    <property type="status" value="NOT_ANNOTATED_CDS"/>
    <property type="molecule type" value="Genomic_DNA"/>
</dbReference>
<dbReference type="EMBL" id="AK100433">
    <property type="protein sequence ID" value="BAG94604.1"/>
    <property type="molecule type" value="mRNA"/>
</dbReference>
<dbReference type="RefSeq" id="XP_015646176.1">
    <property type="nucleotide sequence ID" value="XM_015790690.1"/>
</dbReference>
<dbReference type="SMR" id="Q0D3D2"/>
<dbReference type="FunCoup" id="Q0D3D2">
    <property type="interactions" value="131"/>
</dbReference>
<dbReference type="STRING" id="39947.Q0D3D2"/>
<dbReference type="PaxDb" id="39947-Q0D3D2"/>
<dbReference type="EnsemblPlants" id="Os07t0693100-01">
    <property type="protein sequence ID" value="Os07t0693100-01"/>
    <property type="gene ID" value="Os07g0693100"/>
</dbReference>
<dbReference type="Gramene" id="Os07t0693100-01">
    <property type="protein sequence ID" value="Os07t0693100-01"/>
    <property type="gene ID" value="Os07g0693100"/>
</dbReference>
<dbReference type="KEGG" id="dosa:Os07g0693100"/>
<dbReference type="eggNOG" id="KOG1184">
    <property type="taxonomic scope" value="Eukaryota"/>
</dbReference>
<dbReference type="HOGENOM" id="CLU_013748_0_2_1"/>
<dbReference type="InParanoid" id="Q0D3D2"/>
<dbReference type="OMA" id="FTMFAEM"/>
<dbReference type="OrthoDB" id="3970464at2759"/>
<dbReference type="PlantReactome" id="R-OSA-1119267">
    <property type="pathway name" value="Phenylalanine degradation III"/>
</dbReference>
<dbReference type="PlantReactome" id="R-OSA-1119460">
    <property type="pathway name" value="Isoleucine biosynthesis from threonine"/>
</dbReference>
<dbReference type="PlantReactome" id="R-OSA-1119486">
    <property type="pathway name" value="IAA biosynthesis I"/>
</dbReference>
<dbReference type="PlantReactome" id="R-OSA-1119600">
    <property type="pathway name" value="Valine biosynthesis"/>
</dbReference>
<dbReference type="Proteomes" id="UP000000763">
    <property type="component" value="Chromosome 7"/>
</dbReference>
<dbReference type="Proteomes" id="UP000007752">
    <property type="component" value="Chromosome 7"/>
</dbReference>
<dbReference type="Proteomes" id="UP000059680">
    <property type="component" value="Chromosome 7"/>
</dbReference>
<dbReference type="ExpressionAtlas" id="Q0D3D2">
    <property type="expression patterns" value="baseline and differential"/>
</dbReference>
<dbReference type="GO" id="GO:0005829">
    <property type="term" value="C:cytosol"/>
    <property type="evidence" value="ECO:0000318"/>
    <property type="project" value="GO_Central"/>
</dbReference>
<dbReference type="GO" id="GO:0000287">
    <property type="term" value="F:magnesium ion binding"/>
    <property type="evidence" value="ECO:0007669"/>
    <property type="project" value="InterPro"/>
</dbReference>
<dbReference type="GO" id="GO:0004737">
    <property type="term" value="F:pyruvate decarboxylase activity"/>
    <property type="evidence" value="ECO:0000318"/>
    <property type="project" value="GO_Central"/>
</dbReference>
<dbReference type="GO" id="GO:0030976">
    <property type="term" value="F:thiamine pyrophosphate binding"/>
    <property type="evidence" value="ECO:0007669"/>
    <property type="project" value="InterPro"/>
</dbReference>
<dbReference type="GO" id="GO:0000949">
    <property type="term" value="P:aromatic amino acid family catabolic process to alcohol via Ehrlich pathway"/>
    <property type="evidence" value="ECO:0000318"/>
    <property type="project" value="GO_Central"/>
</dbReference>
<dbReference type="CDD" id="cd02005">
    <property type="entry name" value="TPP_PDC_IPDC"/>
    <property type="match status" value="1"/>
</dbReference>
<dbReference type="CDD" id="cd07038">
    <property type="entry name" value="TPP_PYR_PDC_IPDC_like"/>
    <property type="match status" value="1"/>
</dbReference>
<dbReference type="FunFam" id="3.40.50.1220:FF:000009">
    <property type="entry name" value="Pyruvate decarboxylase 1"/>
    <property type="match status" value="1"/>
</dbReference>
<dbReference type="FunFam" id="3.40.50.970:FF:000021">
    <property type="entry name" value="Pyruvate decarboxylase 1"/>
    <property type="match status" value="1"/>
</dbReference>
<dbReference type="FunFam" id="3.40.50.970:FF:000017">
    <property type="entry name" value="pyruvate decarboxylase 1"/>
    <property type="match status" value="1"/>
</dbReference>
<dbReference type="Gene3D" id="3.40.50.970">
    <property type="match status" value="2"/>
</dbReference>
<dbReference type="Gene3D" id="3.40.50.1220">
    <property type="entry name" value="TPP-binding domain"/>
    <property type="match status" value="1"/>
</dbReference>
<dbReference type="InterPro" id="IPR029035">
    <property type="entry name" value="DHS-like_NAD/FAD-binding_dom"/>
</dbReference>
<dbReference type="InterPro" id="IPR012110">
    <property type="entry name" value="PDC/IPDC-like"/>
</dbReference>
<dbReference type="InterPro" id="IPR029061">
    <property type="entry name" value="THDP-binding"/>
</dbReference>
<dbReference type="InterPro" id="IPR012000">
    <property type="entry name" value="Thiamin_PyroP_enz_cen_dom"/>
</dbReference>
<dbReference type="InterPro" id="IPR012001">
    <property type="entry name" value="Thiamin_PyroP_enz_TPP-bd_dom"/>
</dbReference>
<dbReference type="InterPro" id="IPR011766">
    <property type="entry name" value="TPP_enzyme_TPP-bd"/>
</dbReference>
<dbReference type="InterPro" id="IPR047214">
    <property type="entry name" value="TPP_PDC_IPDC"/>
</dbReference>
<dbReference type="InterPro" id="IPR047213">
    <property type="entry name" value="TPP_PYR_PDC_IPDC-like"/>
</dbReference>
<dbReference type="PANTHER" id="PTHR43452">
    <property type="entry name" value="PYRUVATE DECARBOXYLASE"/>
    <property type="match status" value="1"/>
</dbReference>
<dbReference type="PANTHER" id="PTHR43452:SF5">
    <property type="entry name" value="PYRUVATE DECARBOXYLASE 3"/>
    <property type="match status" value="1"/>
</dbReference>
<dbReference type="Pfam" id="PF02775">
    <property type="entry name" value="TPP_enzyme_C"/>
    <property type="match status" value="1"/>
</dbReference>
<dbReference type="Pfam" id="PF00205">
    <property type="entry name" value="TPP_enzyme_M"/>
    <property type="match status" value="1"/>
</dbReference>
<dbReference type="Pfam" id="PF02776">
    <property type="entry name" value="TPP_enzyme_N"/>
    <property type="match status" value="1"/>
</dbReference>
<dbReference type="PIRSF" id="PIRSF036565">
    <property type="entry name" value="Pyruvt_ip_decrb"/>
    <property type="match status" value="1"/>
</dbReference>
<dbReference type="SUPFAM" id="SSF52467">
    <property type="entry name" value="DHS-like NAD/FAD-binding domain"/>
    <property type="match status" value="1"/>
</dbReference>
<dbReference type="SUPFAM" id="SSF52518">
    <property type="entry name" value="Thiamin diphosphate-binding fold (THDP-binding)"/>
    <property type="match status" value="2"/>
</dbReference>
<evidence type="ECO:0000250" key="1"/>
<evidence type="ECO:0000305" key="2"/>
<organism>
    <name type="scientific">Oryza sativa subsp. japonica</name>
    <name type="common">Rice</name>
    <dbReference type="NCBI Taxonomy" id="39947"/>
    <lineage>
        <taxon>Eukaryota</taxon>
        <taxon>Viridiplantae</taxon>
        <taxon>Streptophyta</taxon>
        <taxon>Embryophyta</taxon>
        <taxon>Tracheophyta</taxon>
        <taxon>Spermatophyta</taxon>
        <taxon>Magnoliopsida</taxon>
        <taxon>Liliopsida</taxon>
        <taxon>Poales</taxon>
        <taxon>Poaceae</taxon>
        <taxon>BOP clade</taxon>
        <taxon>Oryzoideae</taxon>
        <taxon>Oryzeae</taxon>
        <taxon>Oryzinae</taxon>
        <taxon>Oryza</taxon>
        <taxon>Oryza sativa</taxon>
    </lineage>
</organism>
<protein>
    <recommendedName>
        <fullName>Pyruvate decarboxylase 3</fullName>
        <shortName>PDC</shortName>
        <ecNumber>4.1.1.1</ecNumber>
    </recommendedName>
</protein>
<reference key="1">
    <citation type="submission" date="2003-05" db="EMBL/GenBank/DDBJ databases">
        <title>Oryza sativa pyruvate decarboxylase 3 (PDC3).</title>
        <authorList>
            <person name="Nakazono M."/>
        </authorList>
    </citation>
    <scope>NUCLEOTIDE SEQUENCE [MRNA]</scope>
    <source>
        <strain>cv. Nipponbare</strain>
    </source>
</reference>
<reference key="2">
    <citation type="journal article" date="2005" name="Nature">
        <title>The map-based sequence of the rice genome.</title>
        <authorList>
            <consortium name="International rice genome sequencing project (IRGSP)"/>
        </authorList>
    </citation>
    <scope>NUCLEOTIDE SEQUENCE [LARGE SCALE GENOMIC DNA]</scope>
    <source>
        <strain>cv. Nipponbare</strain>
    </source>
</reference>
<reference key="3">
    <citation type="journal article" date="2008" name="Nucleic Acids Res.">
        <title>The rice annotation project database (RAP-DB): 2008 update.</title>
        <authorList>
            <consortium name="The rice annotation project (RAP)"/>
        </authorList>
    </citation>
    <scope>GENOME REANNOTATION</scope>
    <source>
        <strain>cv. Nipponbare</strain>
    </source>
</reference>
<reference key="4">
    <citation type="journal article" date="2013" name="Rice">
        <title>Improvement of the Oryza sativa Nipponbare reference genome using next generation sequence and optical map data.</title>
        <authorList>
            <person name="Kawahara Y."/>
            <person name="de la Bastide M."/>
            <person name="Hamilton J.P."/>
            <person name="Kanamori H."/>
            <person name="McCombie W.R."/>
            <person name="Ouyang S."/>
            <person name="Schwartz D.C."/>
            <person name="Tanaka T."/>
            <person name="Wu J."/>
            <person name="Zhou S."/>
            <person name="Childs K.L."/>
            <person name="Davidson R.M."/>
            <person name="Lin H."/>
            <person name="Quesada-Ocampo L."/>
            <person name="Vaillancourt B."/>
            <person name="Sakai H."/>
            <person name="Lee S.S."/>
            <person name="Kim J."/>
            <person name="Numa H."/>
            <person name="Itoh T."/>
            <person name="Buell C.R."/>
            <person name="Matsumoto T."/>
        </authorList>
    </citation>
    <scope>GENOME REANNOTATION</scope>
    <source>
        <strain>cv. Nipponbare</strain>
    </source>
</reference>
<reference key="5">
    <citation type="journal article" date="2005" name="PLoS Biol.">
        <title>The genomes of Oryza sativa: a history of duplications.</title>
        <authorList>
            <person name="Yu J."/>
            <person name="Wang J."/>
            <person name="Lin W."/>
            <person name="Li S."/>
            <person name="Li H."/>
            <person name="Zhou J."/>
            <person name="Ni P."/>
            <person name="Dong W."/>
            <person name="Hu S."/>
            <person name="Zeng C."/>
            <person name="Zhang J."/>
            <person name="Zhang Y."/>
            <person name="Li R."/>
            <person name="Xu Z."/>
            <person name="Li S."/>
            <person name="Li X."/>
            <person name="Zheng H."/>
            <person name="Cong L."/>
            <person name="Lin L."/>
            <person name="Yin J."/>
            <person name="Geng J."/>
            <person name="Li G."/>
            <person name="Shi J."/>
            <person name="Liu J."/>
            <person name="Lv H."/>
            <person name="Li J."/>
            <person name="Wang J."/>
            <person name="Deng Y."/>
            <person name="Ran L."/>
            <person name="Shi X."/>
            <person name="Wang X."/>
            <person name="Wu Q."/>
            <person name="Li C."/>
            <person name="Ren X."/>
            <person name="Wang J."/>
            <person name="Wang X."/>
            <person name="Li D."/>
            <person name="Liu D."/>
            <person name="Zhang X."/>
            <person name="Ji Z."/>
            <person name="Zhao W."/>
            <person name="Sun Y."/>
            <person name="Zhang Z."/>
            <person name="Bao J."/>
            <person name="Han Y."/>
            <person name="Dong L."/>
            <person name="Ji J."/>
            <person name="Chen P."/>
            <person name="Wu S."/>
            <person name="Liu J."/>
            <person name="Xiao Y."/>
            <person name="Bu D."/>
            <person name="Tan J."/>
            <person name="Yang L."/>
            <person name="Ye C."/>
            <person name="Zhang J."/>
            <person name="Xu J."/>
            <person name="Zhou Y."/>
            <person name="Yu Y."/>
            <person name="Zhang B."/>
            <person name="Zhuang S."/>
            <person name="Wei H."/>
            <person name="Liu B."/>
            <person name="Lei M."/>
            <person name="Yu H."/>
            <person name="Li Y."/>
            <person name="Xu H."/>
            <person name="Wei S."/>
            <person name="He X."/>
            <person name="Fang L."/>
            <person name="Zhang Z."/>
            <person name="Zhang Y."/>
            <person name="Huang X."/>
            <person name="Su Z."/>
            <person name="Tong W."/>
            <person name="Li J."/>
            <person name="Tong Z."/>
            <person name="Li S."/>
            <person name="Ye J."/>
            <person name="Wang L."/>
            <person name="Fang L."/>
            <person name="Lei T."/>
            <person name="Chen C.-S."/>
            <person name="Chen H.-C."/>
            <person name="Xu Z."/>
            <person name="Li H."/>
            <person name="Huang H."/>
            <person name="Zhang F."/>
            <person name="Xu H."/>
            <person name="Li N."/>
            <person name="Zhao C."/>
            <person name="Li S."/>
            <person name="Dong L."/>
            <person name="Huang Y."/>
            <person name="Li L."/>
            <person name="Xi Y."/>
            <person name="Qi Q."/>
            <person name="Li W."/>
            <person name="Zhang B."/>
            <person name="Hu W."/>
            <person name="Zhang Y."/>
            <person name="Tian X."/>
            <person name="Jiao Y."/>
            <person name="Liang X."/>
            <person name="Jin J."/>
            <person name="Gao L."/>
            <person name="Zheng W."/>
            <person name="Hao B."/>
            <person name="Liu S.-M."/>
            <person name="Wang W."/>
            <person name="Yuan L."/>
            <person name="Cao M."/>
            <person name="McDermott J."/>
            <person name="Samudrala R."/>
            <person name="Wang J."/>
            <person name="Wong G.K.-S."/>
            <person name="Yang H."/>
        </authorList>
    </citation>
    <scope>NUCLEOTIDE SEQUENCE [LARGE SCALE GENOMIC DNA]</scope>
    <source>
        <strain>cv. Nipponbare</strain>
    </source>
</reference>
<reference key="6">
    <citation type="journal article" date="2003" name="Science">
        <title>Collection, mapping, and annotation of over 28,000 cDNA clones from japonica rice.</title>
        <authorList>
            <consortium name="The rice full-length cDNA consortium"/>
        </authorList>
    </citation>
    <scope>NUCLEOTIDE SEQUENCE [LARGE SCALE MRNA]</scope>
    <source>
        <strain>cv. Nipponbare</strain>
    </source>
</reference>
<feature type="chain" id="PRO_0000090781" description="Pyruvate decarboxylase 3">
    <location>
        <begin position="1"/>
        <end position="587"/>
    </location>
</feature>
<feature type="region of interest" description="Thiamine pyrophosphate binding">
    <location>
        <begin position="415"/>
        <end position="496"/>
    </location>
</feature>
<feature type="binding site" evidence="1">
    <location>
        <position position="48"/>
    </location>
    <ligand>
        <name>substrate</name>
    </ligand>
</feature>
<feature type="binding site" evidence="1">
    <location>
        <position position="135"/>
    </location>
    <ligand>
        <name>substrate</name>
    </ligand>
</feature>
<feature type="binding site" evidence="1">
    <location>
        <position position="464"/>
    </location>
    <ligand>
        <name>Mg(2+)</name>
        <dbReference type="ChEBI" id="CHEBI:18420"/>
    </ligand>
</feature>
<feature type="binding site" evidence="1">
    <location>
        <position position="491"/>
    </location>
    <ligand>
        <name>Mg(2+)</name>
        <dbReference type="ChEBI" id="CHEBI:18420"/>
    </ligand>
</feature>
<feature type="binding site" evidence="1">
    <location>
        <position position="493"/>
    </location>
    <ligand>
        <name>Mg(2+)</name>
        <dbReference type="ChEBI" id="CHEBI:18420"/>
    </ligand>
</feature>
<feature type="binding site" evidence="1">
    <location>
        <position position="497"/>
    </location>
    <ligand>
        <name>substrate</name>
    </ligand>
</feature>
<proteinExistence type="evidence at transcript level"/>
<accession>Q0D3D2</accession>
<accession>B7EQF7</accession>
<accession>P51849</accession>
<accession>Q84NP9</accession>
<keyword id="KW-0210">Decarboxylase</keyword>
<keyword id="KW-0456">Lyase</keyword>
<keyword id="KW-0460">Magnesium</keyword>
<keyword id="KW-0479">Metal-binding</keyword>
<keyword id="KW-1185">Reference proteome</keyword>
<keyword id="KW-0786">Thiamine pyrophosphate</keyword>